<name>TY3H_SCHMA</name>
<comment type="catalytic activity">
    <reaction>
        <text>(6R)-L-erythro-5,6,7,8-tetrahydrobiopterin + L-tyrosine + O2 = (4aS,6R)-4a-hydroxy-L-erythro-5,6,7,8-tetrahydrobiopterin + L-dopa</text>
        <dbReference type="Rhea" id="RHEA:18201"/>
        <dbReference type="ChEBI" id="CHEBI:15379"/>
        <dbReference type="ChEBI" id="CHEBI:15642"/>
        <dbReference type="ChEBI" id="CHEBI:57504"/>
        <dbReference type="ChEBI" id="CHEBI:58315"/>
        <dbReference type="ChEBI" id="CHEBI:59560"/>
        <dbReference type="EC" id="1.14.16.2"/>
    </reaction>
</comment>
<comment type="cofactor">
    <cofactor>
        <name>Fe(2+)</name>
        <dbReference type="ChEBI" id="CHEBI:29033"/>
    </cofactor>
</comment>
<comment type="pathway">
    <text>Catecholamine biosynthesis; dopamine biosynthesis; dopamine from L-tyrosine: step 1/2.</text>
</comment>
<comment type="subcellular location">
    <subcellularLocation>
        <location evidence="2">Cytoplasm</location>
        <location evidence="2">Perinuclear region</location>
    </subcellularLocation>
</comment>
<comment type="similarity">
    <text evidence="3">Belongs to the biopterin-dependent aromatic amino acid hydroxylase family.</text>
</comment>
<evidence type="ECO:0000250" key="1"/>
<evidence type="ECO:0000250" key="2">
    <source>
        <dbReference type="UniProtKB" id="P24529"/>
    </source>
</evidence>
<evidence type="ECO:0000305" key="3"/>
<proteinExistence type="evidence at transcript level"/>
<feature type="chain" id="PRO_0000205567" description="Tyrosine 3-monooxygenase">
    <location>
        <begin position="1"/>
        <end position="465"/>
    </location>
</feature>
<feature type="binding site" evidence="1">
    <location>
        <position position="294"/>
    </location>
    <ligand>
        <name>Fe cation</name>
        <dbReference type="ChEBI" id="CHEBI:24875"/>
    </ligand>
</feature>
<feature type="binding site" evidence="1">
    <location>
        <position position="299"/>
    </location>
    <ligand>
        <name>Fe cation</name>
        <dbReference type="ChEBI" id="CHEBI:24875"/>
    </ligand>
</feature>
<feature type="binding site" evidence="1">
    <location>
        <position position="339"/>
    </location>
    <ligand>
        <name>Fe cation</name>
        <dbReference type="ChEBI" id="CHEBI:24875"/>
    </ligand>
</feature>
<organism>
    <name type="scientific">Schistosoma mansoni</name>
    <name type="common">Blood fluke</name>
    <dbReference type="NCBI Taxonomy" id="6183"/>
    <lineage>
        <taxon>Eukaryota</taxon>
        <taxon>Metazoa</taxon>
        <taxon>Spiralia</taxon>
        <taxon>Lophotrochozoa</taxon>
        <taxon>Platyhelminthes</taxon>
        <taxon>Trematoda</taxon>
        <taxon>Digenea</taxon>
        <taxon>Strigeidida</taxon>
        <taxon>Schistosomatoidea</taxon>
        <taxon>Schistosomatidae</taxon>
        <taxon>Schistosoma</taxon>
    </lineage>
</organism>
<sequence length="465" mass="54081">MKMTMMCDESIEENNKSSTVELNHNEKDGRIHSIIINFHPITHEQSNNQFYIQTLHEILKYIIDKKLNLVHFETRPTLTLSNANRDVQYSCLITLEANEINMSLLYEELRGNSFISGINLLNNQESEDWYPKHISDLDKCQHLLRKFQPELQTDHPGFHDKVYRERREAIAKIAFQYKYGDRIPEVEYTKEEIETWGLVFTKMKAVHASRACREYIDGFQLLEKYCNYNSESIPQLQTICEFMHRTSGFRIRPVAGLVSPKDFLASLAFRVFQCTQYIRHHSRPMHTPEPDCIHELIGHMPMLVNRQFADFSQELGLASLGASEEEITRLSTLYWFTVEFGLCNENGETRALGAGIMSSYGELENAFSDLSVKEPFNINDAAVQVYDDVGYQKIYFVTESIESMKRELRNYINTSGKSTIPIYDPITETVHMKSRFSIRKELLKHVKEEIGQLDTLLNHSNYTLP</sequence>
<accession>O17446</accession>
<reference key="1">
    <citation type="journal article" date="1998" name="J. Neurochem.">
        <title>Cloning and characterization of a novel form of tyrosine hydroxylase from the human parasite, Schistosoma mansoni.</title>
        <authorList>
            <person name="Hamdan F.F."/>
            <person name="Ribeiro P."/>
        </authorList>
    </citation>
    <scope>NUCLEOTIDE SEQUENCE [MRNA]</scope>
    <source>
        <strain>Puerto Rican</strain>
    </source>
</reference>
<gene>
    <name type="primary">TH</name>
</gene>
<dbReference type="EC" id="1.14.16.2"/>
<dbReference type="EMBL" id="AF030336">
    <property type="protein sequence ID" value="AAC62256.1"/>
    <property type="molecule type" value="mRNA"/>
</dbReference>
<dbReference type="SMR" id="O17446"/>
<dbReference type="STRING" id="6183.O17446"/>
<dbReference type="InParanoid" id="O17446"/>
<dbReference type="UniPathway" id="UPA00747">
    <property type="reaction ID" value="UER00733"/>
</dbReference>
<dbReference type="Proteomes" id="UP000008854">
    <property type="component" value="Unassembled WGS sequence"/>
</dbReference>
<dbReference type="GO" id="GO:0030424">
    <property type="term" value="C:axon"/>
    <property type="evidence" value="ECO:0007669"/>
    <property type="project" value="TreeGrafter"/>
</dbReference>
<dbReference type="GO" id="GO:0043204">
    <property type="term" value="C:perikaryon"/>
    <property type="evidence" value="ECO:0007669"/>
    <property type="project" value="TreeGrafter"/>
</dbReference>
<dbReference type="GO" id="GO:0048471">
    <property type="term" value="C:perinuclear region of cytoplasm"/>
    <property type="evidence" value="ECO:0007669"/>
    <property type="project" value="UniProtKB-SubCell"/>
</dbReference>
<dbReference type="GO" id="GO:0005506">
    <property type="term" value="F:iron ion binding"/>
    <property type="evidence" value="ECO:0007669"/>
    <property type="project" value="InterPro"/>
</dbReference>
<dbReference type="GO" id="GO:0004511">
    <property type="term" value="F:tyrosine 3-monooxygenase activity"/>
    <property type="evidence" value="ECO:0007669"/>
    <property type="project" value="UniProtKB-EC"/>
</dbReference>
<dbReference type="GO" id="GO:0009072">
    <property type="term" value="P:aromatic amino acid metabolic process"/>
    <property type="evidence" value="ECO:0007669"/>
    <property type="project" value="InterPro"/>
</dbReference>
<dbReference type="GO" id="GO:0042416">
    <property type="term" value="P:dopamine biosynthetic process"/>
    <property type="evidence" value="ECO:0007669"/>
    <property type="project" value="UniProtKB-UniPathway"/>
</dbReference>
<dbReference type="CDD" id="cd03345">
    <property type="entry name" value="eu_TyrOH"/>
    <property type="match status" value="1"/>
</dbReference>
<dbReference type="Gene3D" id="1.10.800.10">
    <property type="entry name" value="Aromatic amino acid hydroxylase"/>
    <property type="match status" value="1"/>
</dbReference>
<dbReference type="InterPro" id="IPR001273">
    <property type="entry name" value="ArAA_hydroxylase"/>
</dbReference>
<dbReference type="InterPro" id="IPR018301">
    <property type="entry name" value="ArAA_hydroxylase_Fe/CU_BS"/>
</dbReference>
<dbReference type="InterPro" id="IPR036951">
    <property type="entry name" value="ArAA_hydroxylase_sf"/>
</dbReference>
<dbReference type="InterPro" id="IPR036329">
    <property type="entry name" value="Aro-AA_hydroxylase_C_sf"/>
</dbReference>
<dbReference type="InterPro" id="IPR019774">
    <property type="entry name" value="Aromatic-AA_hydroxylase_C"/>
</dbReference>
<dbReference type="InterPro" id="IPR041903">
    <property type="entry name" value="Eu_TyrOH_cat"/>
</dbReference>
<dbReference type="InterPro" id="IPR005962">
    <property type="entry name" value="Tyr_3_mOase"/>
</dbReference>
<dbReference type="InterPro" id="IPR019773">
    <property type="entry name" value="Tyrosine_3-monooxygenase-like"/>
</dbReference>
<dbReference type="NCBIfam" id="TIGR01269">
    <property type="entry name" value="Tyr_3_monoox"/>
    <property type="match status" value="1"/>
</dbReference>
<dbReference type="PANTHER" id="PTHR11473">
    <property type="entry name" value="AROMATIC AMINO ACID HYDROXYLASE"/>
    <property type="match status" value="1"/>
</dbReference>
<dbReference type="PANTHER" id="PTHR11473:SF15">
    <property type="entry name" value="TYROSINE 3-MONOOXYGENASE"/>
    <property type="match status" value="1"/>
</dbReference>
<dbReference type="Pfam" id="PF00351">
    <property type="entry name" value="Biopterin_H"/>
    <property type="match status" value="1"/>
</dbReference>
<dbReference type="PIRSF" id="PIRSF000336">
    <property type="entry name" value="TH"/>
    <property type="match status" value="1"/>
</dbReference>
<dbReference type="PRINTS" id="PR00372">
    <property type="entry name" value="FYWHYDRXLASE"/>
</dbReference>
<dbReference type="SUPFAM" id="SSF56534">
    <property type="entry name" value="Aromatic aminoacid monoxygenases, catalytic and oligomerization domains"/>
    <property type="match status" value="1"/>
</dbReference>
<dbReference type="PROSITE" id="PS00367">
    <property type="entry name" value="BH4_AAA_HYDROXYL_1"/>
    <property type="match status" value="1"/>
</dbReference>
<dbReference type="PROSITE" id="PS51410">
    <property type="entry name" value="BH4_AAA_HYDROXYL_2"/>
    <property type="match status" value="1"/>
</dbReference>
<keyword id="KW-0127">Catecholamine biosynthesis</keyword>
<keyword id="KW-0963">Cytoplasm</keyword>
<keyword id="KW-0408">Iron</keyword>
<keyword id="KW-0479">Metal-binding</keyword>
<keyword id="KW-0503">Monooxygenase</keyword>
<keyword id="KW-0530">Neurotransmitter biosynthesis</keyword>
<keyword id="KW-0560">Oxidoreductase</keyword>
<keyword id="KW-1185">Reference proteome</keyword>
<protein>
    <recommendedName>
        <fullName>Tyrosine 3-monooxygenase</fullName>
        <ecNumber>1.14.16.2</ecNumber>
    </recommendedName>
    <alternativeName>
        <fullName>Tyrosine 3-hydroxylase</fullName>
        <shortName>TH</shortName>
    </alternativeName>
</protein>